<protein>
    <recommendedName>
        <fullName evidence="1">Eukaryotic translation initiation factor 3 subunit I</fullName>
        <shortName evidence="1">eIF3i</shortName>
    </recommendedName>
    <alternativeName>
        <fullName evidence="1">Eukaryotic translation initiation factor 3 subunit 2</fullName>
    </alternativeName>
    <alternativeName>
        <fullName>TRIP-1 homolog</fullName>
    </alternativeName>
    <alternativeName>
        <fullName evidence="1">eIF-3-beta</fullName>
    </alternativeName>
</protein>
<name>EIF3I_DROME</name>
<reference key="1">
    <citation type="submission" date="1997-06" db="EMBL/GenBank/DDBJ databases">
        <title>Characterization of the TRIP-1 homologs from Saccharomyces cerevisiae and Drosophila melanogaster.</title>
        <authorList>
            <person name="Cho S.H."/>
            <person name="Evangelista C."/>
            <person name="Padgett R.W."/>
        </authorList>
    </citation>
    <scope>NUCLEOTIDE SEQUENCE [MRNA]</scope>
</reference>
<reference key="2">
    <citation type="journal article" date="2000" name="Science">
        <title>The genome sequence of Drosophila melanogaster.</title>
        <authorList>
            <person name="Adams M.D."/>
            <person name="Celniker S.E."/>
            <person name="Holt R.A."/>
            <person name="Evans C.A."/>
            <person name="Gocayne J.D."/>
            <person name="Amanatides P.G."/>
            <person name="Scherer S.E."/>
            <person name="Li P.W."/>
            <person name="Hoskins R.A."/>
            <person name="Galle R.F."/>
            <person name="George R.A."/>
            <person name="Lewis S.E."/>
            <person name="Richards S."/>
            <person name="Ashburner M."/>
            <person name="Henderson S.N."/>
            <person name="Sutton G.G."/>
            <person name="Wortman J.R."/>
            <person name="Yandell M.D."/>
            <person name="Zhang Q."/>
            <person name="Chen L.X."/>
            <person name="Brandon R.C."/>
            <person name="Rogers Y.-H.C."/>
            <person name="Blazej R.G."/>
            <person name="Champe M."/>
            <person name="Pfeiffer B.D."/>
            <person name="Wan K.H."/>
            <person name="Doyle C."/>
            <person name="Baxter E.G."/>
            <person name="Helt G."/>
            <person name="Nelson C.R."/>
            <person name="Miklos G.L.G."/>
            <person name="Abril J.F."/>
            <person name="Agbayani A."/>
            <person name="An H.-J."/>
            <person name="Andrews-Pfannkoch C."/>
            <person name="Baldwin D."/>
            <person name="Ballew R.M."/>
            <person name="Basu A."/>
            <person name="Baxendale J."/>
            <person name="Bayraktaroglu L."/>
            <person name="Beasley E.M."/>
            <person name="Beeson K.Y."/>
            <person name="Benos P.V."/>
            <person name="Berman B.P."/>
            <person name="Bhandari D."/>
            <person name="Bolshakov S."/>
            <person name="Borkova D."/>
            <person name="Botchan M.R."/>
            <person name="Bouck J."/>
            <person name="Brokstein P."/>
            <person name="Brottier P."/>
            <person name="Burtis K.C."/>
            <person name="Busam D.A."/>
            <person name="Butler H."/>
            <person name="Cadieu E."/>
            <person name="Center A."/>
            <person name="Chandra I."/>
            <person name="Cherry J.M."/>
            <person name="Cawley S."/>
            <person name="Dahlke C."/>
            <person name="Davenport L.B."/>
            <person name="Davies P."/>
            <person name="de Pablos B."/>
            <person name="Delcher A."/>
            <person name="Deng Z."/>
            <person name="Mays A.D."/>
            <person name="Dew I."/>
            <person name="Dietz S.M."/>
            <person name="Dodson K."/>
            <person name="Doup L.E."/>
            <person name="Downes M."/>
            <person name="Dugan-Rocha S."/>
            <person name="Dunkov B.C."/>
            <person name="Dunn P."/>
            <person name="Durbin K.J."/>
            <person name="Evangelista C.C."/>
            <person name="Ferraz C."/>
            <person name="Ferriera S."/>
            <person name="Fleischmann W."/>
            <person name="Fosler C."/>
            <person name="Gabrielian A.E."/>
            <person name="Garg N.S."/>
            <person name="Gelbart W.M."/>
            <person name="Glasser K."/>
            <person name="Glodek A."/>
            <person name="Gong F."/>
            <person name="Gorrell J.H."/>
            <person name="Gu Z."/>
            <person name="Guan P."/>
            <person name="Harris M."/>
            <person name="Harris N.L."/>
            <person name="Harvey D.A."/>
            <person name="Heiman T.J."/>
            <person name="Hernandez J.R."/>
            <person name="Houck J."/>
            <person name="Hostin D."/>
            <person name="Houston K.A."/>
            <person name="Howland T.J."/>
            <person name="Wei M.-H."/>
            <person name="Ibegwam C."/>
            <person name="Jalali M."/>
            <person name="Kalush F."/>
            <person name="Karpen G.H."/>
            <person name="Ke Z."/>
            <person name="Kennison J.A."/>
            <person name="Ketchum K.A."/>
            <person name="Kimmel B.E."/>
            <person name="Kodira C.D."/>
            <person name="Kraft C.L."/>
            <person name="Kravitz S."/>
            <person name="Kulp D."/>
            <person name="Lai Z."/>
            <person name="Lasko P."/>
            <person name="Lei Y."/>
            <person name="Levitsky A.A."/>
            <person name="Li J.H."/>
            <person name="Li Z."/>
            <person name="Liang Y."/>
            <person name="Lin X."/>
            <person name="Liu X."/>
            <person name="Mattei B."/>
            <person name="McIntosh T.C."/>
            <person name="McLeod M.P."/>
            <person name="McPherson D."/>
            <person name="Merkulov G."/>
            <person name="Milshina N.V."/>
            <person name="Mobarry C."/>
            <person name="Morris J."/>
            <person name="Moshrefi A."/>
            <person name="Mount S.M."/>
            <person name="Moy M."/>
            <person name="Murphy B."/>
            <person name="Murphy L."/>
            <person name="Muzny D.M."/>
            <person name="Nelson D.L."/>
            <person name="Nelson D.R."/>
            <person name="Nelson K.A."/>
            <person name="Nixon K."/>
            <person name="Nusskern D.R."/>
            <person name="Pacleb J.M."/>
            <person name="Palazzolo M."/>
            <person name="Pittman G.S."/>
            <person name="Pan S."/>
            <person name="Pollard J."/>
            <person name="Puri V."/>
            <person name="Reese M.G."/>
            <person name="Reinert K."/>
            <person name="Remington K."/>
            <person name="Saunders R.D.C."/>
            <person name="Scheeler F."/>
            <person name="Shen H."/>
            <person name="Shue B.C."/>
            <person name="Siden-Kiamos I."/>
            <person name="Simpson M."/>
            <person name="Skupski M.P."/>
            <person name="Smith T.J."/>
            <person name="Spier E."/>
            <person name="Spradling A.C."/>
            <person name="Stapleton M."/>
            <person name="Strong R."/>
            <person name="Sun E."/>
            <person name="Svirskas R."/>
            <person name="Tector C."/>
            <person name="Turner R."/>
            <person name="Venter E."/>
            <person name="Wang A.H."/>
            <person name="Wang X."/>
            <person name="Wang Z.-Y."/>
            <person name="Wassarman D.A."/>
            <person name="Weinstock G.M."/>
            <person name="Weissenbach J."/>
            <person name="Williams S.M."/>
            <person name="Woodage T."/>
            <person name="Worley K.C."/>
            <person name="Wu D."/>
            <person name="Yang S."/>
            <person name="Yao Q.A."/>
            <person name="Ye J."/>
            <person name="Yeh R.-F."/>
            <person name="Zaveri J.S."/>
            <person name="Zhan M."/>
            <person name="Zhang G."/>
            <person name="Zhao Q."/>
            <person name="Zheng L."/>
            <person name="Zheng X.H."/>
            <person name="Zhong F.N."/>
            <person name="Zhong W."/>
            <person name="Zhou X."/>
            <person name="Zhu S.C."/>
            <person name="Zhu X."/>
            <person name="Smith H.O."/>
            <person name="Gibbs R.A."/>
            <person name="Myers E.W."/>
            <person name="Rubin G.M."/>
            <person name="Venter J.C."/>
        </authorList>
    </citation>
    <scope>NUCLEOTIDE SEQUENCE [LARGE SCALE GENOMIC DNA]</scope>
    <source>
        <strain>Berkeley</strain>
    </source>
</reference>
<reference key="3">
    <citation type="journal article" date="2002" name="Genome Biol.">
        <title>Annotation of the Drosophila melanogaster euchromatic genome: a systematic review.</title>
        <authorList>
            <person name="Misra S."/>
            <person name="Crosby M.A."/>
            <person name="Mungall C.J."/>
            <person name="Matthews B.B."/>
            <person name="Campbell K.S."/>
            <person name="Hradecky P."/>
            <person name="Huang Y."/>
            <person name="Kaminker J.S."/>
            <person name="Millburn G.H."/>
            <person name="Prochnik S.E."/>
            <person name="Smith C.D."/>
            <person name="Tupy J.L."/>
            <person name="Whitfield E.J."/>
            <person name="Bayraktaroglu L."/>
            <person name="Berman B.P."/>
            <person name="Bettencourt B.R."/>
            <person name="Celniker S.E."/>
            <person name="de Grey A.D.N.J."/>
            <person name="Drysdale R.A."/>
            <person name="Harris N.L."/>
            <person name="Richter J."/>
            <person name="Russo S."/>
            <person name="Schroeder A.J."/>
            <person name="Shu S.Q."/>
            <person name="Stapleton M."/>
            <person name="Yamada C."/>
            <person name="Ashburner M."/>
            <person name="Gelbart W.M."/>
            <person name="Rubin G.M."/>
            <person name="Lewis S.E."/>
        </authorList>
    </citation>
    <scope>GENOME REANNOTATION</scope>
    <source>
        <strain>Berkeley</strain>
    </source>
</reference>
<reference key="4">
    <citation type="journal article" date="2002" name="Genome Biol.">
        <title>A Drosophila full-length cDNA resource.</title>
        <authorList>
            <person name="Stapleton M."/>
            <person name="Carlson J.W."/>
            <person name="Brokstein P."/>
            <person name="Yu C."/>
            <person name="Champe M."/>
            <person name="George R.A."/>
            <person name="Guarin H."/>
            <person name="Kronmiller B."/>
            <person name="Pacleb J.M."/>
            <person name="Park S."/>
            <person name="Wan K.H."/>
            <person name="Rubin G.M."/>
            <person name="Celniker S.E."/>
        </authorList>
    </citation>
    <scope>NUCLEOTIDE SEQUENCE [LARGE SCALE MRNA]</scope>
    <source>
        <strain>Berkeley</strain>
        <tissue>Embryo</tissue>
    </source>
</reference>
<reference key="5">
    <citation type="journal article" date="2007" name="J. Biol. Chem.">
        <title>The essential Drosophila ATP-binding cassette domain protein, pixie, binds the 40 S ribosome in an ATP-dependent manner and is required for translation initiation.</title>
        <authorList>
            <person name="Andersen D.S."/>
            <person name="Leevers S.J."/>
        </authorList>
    </citation>
    <scope>INTERACTION WITH PIX</scope>
    <scope>ASSOCIATION WITH THE 40S RIBOSOME</scope>
</reference>
<keyword id="KW-0963">Cytoplasm</keyword>
<keyword id="KW-0396">Initiation factor</keyword>
<keyword id="KW-0648">Protein biosynthesis</keyword>
<keyword id="KW-1185">Reference proteome</keyword>
<keyword id="KW-0677">Repeat</keyword>
<keyword id="KW-0853">WD repeat</keyword>
<gene>
    <name evidence="1" type="primary">eIF3i</name>
    <name evidence="1" type="synonym">eif3-S2</name>
    <name evidence="1" type="synonym">Trip1</name>
    <name evidence="3" type="ORF">CG8882</name>
</gene>
<organism>
    <name type="scientific">Drosophila melanogaster</name>
    <name type="common">Fruit fly</name>
    <dbReference type="NCBI Taxonomy" id="7227"/>
    <lineage>
        <taxon>Eukaryota</taxon>
        <taxon>Metazoa</taxon>
        <taxon>Ecdysozoa</taxon>
        <taxon>Arthropoda</taxon>
        <taxon>Hexapoda</taxon>
        <taxon>Insecta</taxon>
        <taxon>Pterygota</taxon>
        <taxon>Neoptera</taxon>
        <taxon>Endopterygota</taxon>
        <taxon>Diptera</taxon>
        <taxon>Brachycera</taxon>
        <taxon>Muscomorpha</taxon>
        <taxon>Ephydroidea</taxon>
        <taxon>Drosophilidae</taxon>
        <taxon>Drosophila</taxon>
        <taxon>Sophophora</taxon>
    </lineage>
</organism>
<sequence>MRPLMLQGHERSITQIKYNREGDLLFSCSKDQKPNVWYSLNGERLGTYDGHQGAVWCLDVDWESRKLITGAGDMTAKIWDVEYGTVIASIPTKSSVRTSNFSFSGNQAAYSTDKAMGQSCELFLIDVRNADSSLSEQEPTLRIPMTESKITSMLWGPLDETIITGHDNGNIAIWDIRKGQKVVDSGTDHSAGINDMQLSKDGTMFVTASKDTTAKLFDSESLMCLKTYKTERPVNSAAISPIMDHVVLGGGQDAMEVTTTSTKAGKFDSRFFHLIYEEEFARLKGHFGPINSLAFHPDGKSYASGGEDGFVRVQTFDSTYFENIFE</sequence>
<accession>O02195</accession>
<accession>Q540Y6</accession>
<accession>Q9VMX5</accession>
<proteinExistence type="evidence at protein level"/>
<feature type="chain" id="PRO_0000051038" description="Eukaryotic translation initiation factor 3 subunit I">
    <location>
        <begin position="1"/>
        <end position="326"/>
    </location>
</feature>
<feature type="repeat" description="WD 1">
    <location>
        <begin position="8"/>
        <end position="47"/>
    </location>
</feature>
<feature type="repeat" description="WD 2">
    <location>
        <begin position="50"/>
        <end position="89"/>
    </location>
</feature>
<feature type="repeat" description="WD 3">
    <location>
        <begin position="145"/>
        <end position="184"/>
    </location>
</feature>
<feature type="repeat" description="WD 4">
    <location>
        <begin position="188"/>
        <end position="227"/>
    </location>
</feature>
<feature type="repeat" description="WD 5">
    <location>
        <begin position="285"/>
        <end position="326"/>
    </location>
</feature>
<dbReference type="EMBL" id="U90930">
    <property type="protein sequence ID" value="AAB53431.1"/>
    <property type="molecule type" value="mRNA"/>
</dbReference>
<dbReference type="EMBL" id="AE014134">
    <property type="protein sequence ID" value="AAF52183.1"/>
    <property type="molecule type" value="Genomic_DNA"/>
</dbReference>
<dbReference type="EMBL" id="AY118527">
    <property type="protein sequence ID" value="AAM49896.1"/>
    <property type="molecule type" value="mRNA"/>
</dbReference>
<dbReference type="RefSeq" id="NP_523478.1">
    <property type="nucleotide sequence ID" value="NM_078754.4"/>
</dbReference>
<dbReference type="SMR" id="O02195"/>
<dbReference type="BioGRID" id="59895">
    <property type="interactions" value="24"/>
</dbReference>
<dbReference type="DIP" id="DIP-18772N"/>
<dbReference type="FunCoup" id="O02195">
    <property type="interactions" value="1608"/>
</dbReference>
<dbReference type="IntAct" id="O02195">
    <property type="interactions" value="3"/>
</dbReference>
<dbReference type="STRING" id="7227.FBpp0078689"/>
<dbReference type="PaxDb" id="7227-FBpp0078689"/>
<dbReference type="DNASU" id="33710"/>
<dbReference type="EnsemblMetazoa" id="FBtr0079053">
    <property type="protein sequence ID" value="FBpp0078689"/>
    <property type="gene ID" value="FBgn0015834"/>
</dbReference>
<dbReference type="GeneID" id="33710"/>
<dbReference type="KEGG" id="dme:Dmel_CG8882"/>
<dbReference type="UCSC" id="CG8882-RA">
    <property type="organism name" value="d. melanogaster"/>
</dbReference>
<dbReference type="AGR" id="FB:FBgn0015834"/>
<dbReference type="CTD" id="8668"/>
<dbReference type="FlyBase" id="FBgn0015834">
    <property type="gene designation" value="eIF3i"/>
</dbReference>
<dbReference type="VEuPathDB" id="VectorBase:FBgn0015834"/>
<dbReference type="eggNOG" id="KOG0643">
    <property type="taxonomic scope" value="Eukaryota"/>
</dbReference>
<dbReference type="GeneTree" id="ENSGT00940000161371"/>
<dbReference type="HOGENOM" id="CLU_043845_0_1_1"/>
<dbReference type="InParanoid" id="O02195"/>
<dbReference type="OMA" id="VWFSHNG"/>
<dbReference type="OrthoDB" id="24966at2759"/>
<dbReference type="PhylomeDB" id="O02195"/>
<dbReference type="Reactome" id="R-DME-156827">
    <property type="pathway name" value="L13a-mediated translational silencing of Ceruloplasmin expression"/>
</dbReference>
<dbReference type="Reactome" id="R-DME-72649">
    <property type="pathway name" value="Translation initiation complex formation"/>
</dbReference>
<dbReference type="Reactome" id="R-DME-72689">
    <property type="pathway name" value="Formation of a pool of free 40S subunits"/>
</dbReference>
<dbReference type="Reactome" id="R-DME-72695">
    <property type="pathway name" value="Formation of the ternary complex, and subsequently, the 43S complex"/>
</dbReference>
<dbReference type="Reactome" id="R-DME-72702">
    <property type="pathway name" value="Ribosomal scanning and start codon recognition"/>
</dbReference>
<dbReference type="SignaLink" id="O02195"/>
<dbReference type="BioGRID-ORCS" id="33710">
    <property type="hits" value="0 hits in 1 CRISPR screen"/>
</dbReference>
<dbReference type="ChiTaRS" id="Trip1">
    <property type="organism name" value="fly"/>
</dbReference>
<dbReference type="GenomeRNAi" id="33710"/>
<dbReference type="PRO" id="PR:O02195"/>
<dbReference type="Proteomes" id="UP000000803">
    <property type="component" value="Chromosome 2L"/>
</dbReference>
<dbReference type="Bgee" id="FBgn0015834">
    <property type="expression patterns" value="Expressed in eye disc (Drosophila) and 233 other cell types or tissues"/>
</dbReference>
<dbReference type="GO" id="GO:0016282">
    <property type="term" value="C:eukaryotic 43S preinitiation complex"/>
    <property type="evidence" value="ECO:0007669"/>
    <property type="project" value="UniProtKB-UniRule"/>
</dbReference>
<dbReference type="GO" id="GO:0033290">
    <property type="term" value="C:eukaryotic 48S preinitiation complex"/>
    <property type="evidence" value="ECO:0007669"/>
    <property type="project" value="UniProtKB-UniRule"/>
</dbReference>
<dbReference type="GO" id="GO:0005852">
    <property type="term" value="C:eukaryotic translation initiation factor 3 complex"/>
    <property type="evidence" value="ECO:0000250"/>
    <property type="project" value="FlyBase"/>
</dbReference>
<dbReference type="GO" id="GO:0071541">
    <property type="term" value="C:eukaryotic translation initiation factor 3 complex, eIF3m"/>
    <property type="evidence" value="ECO:0000318"/>
    <property type="project" value="GO_Central"/>
</dbReference>
<dbReference type="GO" id="GO:0003723">
    <property type="term" value="F:RNA binding"/>
    <property type="evidence" value="ECO:0000318"/>
    <property type="project" value="GO_Central"/>
</dbReference>
<dbReference type="GO" id="GO:0003743">
    <property type="term" value="F:translation initiation factor activity"/>
    <property type="evidence" value="ECO:0000250"/>
    <property type="project" value="FlyBase"/>
</dbReference>
<dbReference type="GO" id="GO:0002183">
    <property type="term" value="P:cytoplasmic translational initiation"/>
    <property type="evidence" value="ECO:0000318"/>
    <property type="project" value="GO_Central"/>
</dbReference>
<dbReference type="GO" id="GO:0001732">
    <property type="term" value="P:formation of cytoplasmic translation initiation complex"/>
    <property type="evidence" value="ECO:0007669"/>
    <property type="project" value="UniProtKB-UniRule"/>
</dbReference>
<dbReference type="GO" id="GO:0006413">
    <property type="term" value="P:translational initiation"/>
    <property type="evidence" value="ECO:0000250"/>
    <property type="project" value="FlyBase"/>
</dbReference>
<dbReference type="FunFam" id="2.130.10.10:FF:000127">
    <property type="entry name" value="Eukaryotic translation initiation factor 3 subunit I"/>
    <property type="match status" value="1"/>
</dbReference>
<dbReference type="Gene3D" id="2.130.10.10">
    <property type="entry name" value="YVTN repeat-like/Quinoprotein amine dehydrogenase"/>
    <property type="match status" value="1"/>
</dbReference>
<dbReference type="HAMAP" id="MF_03008">
    <property type="entry name" value="eIF3i"/>
    <property type="match status" value="1"/>
</dbReference>
<dbReference type="InterPro" id="IPR027525">
    <property type="entry name" value="eIF3i"/>
</dbReference>
<dbReference type="InterPro" id="IPR015943">
    <property type="entry name" value="WD40/YVTN_repeat-like_dom_sf"/>
</dbReference>
<dbReference type="InterPro" id="IPR019775">
    <property type="entry name" value="WD40_repeat_CS"/>
</dbReference>
<dbReference type="InterPro" id="IPR036322">
    <property type="entry name" value="WD40_repeat_dom_sf"/>
</dbReference>
<dbReference type="InterPro" id="IPR001680">
    <property type="entry name" value="WD40_rpt"/>
</dbReference>
<dbReference type="PANTHER" id="PTHR19877">
    <property type="entry name" value="EUKARYOTIC TRANSLATION INITIATION FACTOR 3 SUBUNIT I"/>
    <property type="match status" value="1"/>
</dbReference>
<dbReference type="PANTHER" id="PTHR19877:SF1">
    <property type="entry name" value="EUKARYOTIC TRANSLATION INITIATION FACTOR 3 SUBUNIT I"/>
    <property type="match status" value="1"/>
</dbReference>
<dbReference type="Pfam" id="PF24805">
    <property type="entry name" value="EIF3I"/>
    <property type="match status" value="1"/>
</dbReference>
<dbReference type="SMART" id="SM00320">
    <property type="entry name" value="WD40"/>
    <property type="match status" value="6"/>
</dbReference>
<dbReference type="SUPFAM" id="SSF50978">
    <property type="entry name" value="WD40 repeat-like"/>
    <property type="match status" value="1"/>
</dbReference>
<dbReference type="PROSITE" id="PS00678">
    <property type="entry name" value="WD_REPEATS_1"/>
    <property type="match status" value="2"/>
</dbReference>
<dbReference type="PROSITE" id="PS50082">
    <property type="entry name" value="WD_REPEATS_2"/>
    <property type="match status" value="5"/>
</dbReference>
<dbReference type="PROSITE" id="PS50294">
    <property type="entry name" value="WD_REPEATS_REGION"/>
    <property type="match status" value="2"/>
</dbReference>
<evidence type="ECO:0000255" key="1">
    <source>
        <dbReference type="HAMAP-Rule" id="MF_03008"/>
    </source>
</evidence>
<evidence type="ECO:0000269" key="2">
    <source>
    </source>
</evidence>
<evidence type="ECO:0000312" key="3">
    <source>
        <dbReference type="FlyBase" id="FBgn0015834"/>
    </source>
</evidence>
<comment type="function">
    <text evidence="1">Component of the eukaryotic translation initiation factor 3 (eIF-3) complex, which is involved in protein synthesis of a specialized repertoire of mRNAs and, together with other initiation factors, stimulates binding of mRNA and methionyl-tRNAi to the 40S ribosome. The eIF-3 complex specifically targets and initiates translation of a subset of mRNAs involved in cell proliferation.</text>
</comment>
<comment type="subunit">
    <text evidence="1 2">Component of the eukaryotic translation initiation factor 3 (eIF-3) complex. The eIF-3 complex interacts with pix.</text>
</comment>
<comment type="subcellular location">
    <subcellularLocation>
        <location evidence="1">Cytoplasm</location>
    </subcellularLocation>
</comment>
<comment type="similarity">
    <text evidence="1">Belongs to the eIF-3 subunit I family.</text>
</comment>